<feature type="propeptide" id="PRO_0000026601" description="Removed in mature form" evidence="1">
    <location>
        <begin position="1"/>
        <end position="72"/>
    </location>
</feature>
<feature type="chain" id="PRO_0000026602" description="Proteasome subunit beta type-8">
    <location>
        <begin position="73"/>
        <end position="276"/>
    </location>
</feature>
<feature type="active site" description="Nucleophile" evidence="1">
    <location>
        <position position="73"/>
    </location>
</feature>
<feature type="site" description="Cleavage; by autolysis" evidence="2">
    <location>
        <begin position="72"/>
        <end position="73"/>
    </location>
</feature>
<feature type="sequence conflict" description="In Ref. 2." evidence="6" ref="2">
    <original>L</original>
    <variation>S</variation>
    <location>
        <position position="6"/>
    </location>
</feature>
<feature type="sequence conflict" description="In Ref. 2." evidence="6" ref="2">
    <original>EWAAVDAGS</original>
    <variation>SGLAVDAE</variation>
    <location>
        <begin position="16"/>
        <end position="24"/>
    </location>
</feature>
<feature type="sequence conflict" description="In Ref. 2." evidence="6" ref="2">
    <original>L</original>
    <variation>S</variation>
    <location>
        <position position="54"/>
    </location>
</feature>
<organism>
    <name type="scientific">Rattus norvegicus</name>
    <name type="common">Rat</name>
    <dbReference type="NCBI Taxonomy" id="10116"/>
    <lineage>
        <taxon>Eukaryota</taxon>
        <taxon>Metazoa</taxon>
        <taxon>Chordata</taxon>
        <taxon>Craniata</taxon>
        <taxon>Vertebrata</taxon>
        <taxon>Euteleostomi</taxon>
        <taxon>Mammalia</taxon>
        <taxon>Eutheria</taxon>
        <taxon>Euarchontoglires</taxon>
        <taxon>Glires</taxon>
        <taxon>Rodentia</taxon>
        <taxon>Myomorpha</taxon>
        <taxon>Muroidea</taxon>
        <taxon>Muridae</taxon>
        <taxon>Murinae</taxon>
        <taxon>Rattus</taxon>
    </lineage>
</organism>
<gene>
    <name type="primary">Psmb8</name>
</gene>
<accession>P28064</accession>
<accession>Q6MGA4</accession>
<name>PSB8_RAT</name>
<proteinExistence type="evidence at protein level"/>
<reference key="1">
    <citation type="journal article" date="2004" name="Genome Res.">
        <title>The genomic sequence and comparative analysis of the rat major histocompatibility complex.</title>
        <authorList>
            <person name="Hurt P."/>
            <person name="Walter L."/>
            <person name="Sudbrak R."/>
            <person name="Klages S."/>
            <person name="Mueller I."/>
            <person name="Shiina T."/>
            <person name="Inoko H."/>
            <person name="Lehrach H."/>
            <person name="Guenther E."/>
            <person name="Reinhardt R."/>
            <person name="Himmelbauer H."/>
        </authorList>
    </citation>
    <scope>NUCLEOTIDE SEQUENCE [LARGE SCALE GENOMIC DNA]</scope>
    <source>
        <strain>Brown Norway</strain>
    </source>
</reference>
<reference key="2">
    <citation type="journal article" date="1992" name="FEBS Lett.">
        <title>cDNA cloning of rat proteasome subunit RC1, a homologue of RING10 located in the human MHC class II region.</title>
        <authorList>
            <person name="Aki M."/>
            <person name="Tamura T."/>
            <person name="Fuminori T."/>
            <person name="Iwanaga S."/>
            <person name="Kawamura Y."/>
            <person name="Shimbara N."/>
            <person name="Kagawa S."/>
            <person name="Tanaka K."/>
            <person name="Ichihara A."/>
        </authorList>
    </citation>
    <scope>NUCLEOTIDE SEQUENCE [MRNA] OF 5-276</scope>
</reference>
<reference key="3">
    <citation type="journal article" date="2007" name="Biol. Reprod.">
        <title>Differential expression of genes encoding constitutive and inducible 20S proteasomal core subunits in the testis and epididymis of theophylline- or 1,3-dinitrobenzene-exposed rats.</title>
        <authorList>
            <person name="Tengowski M.W."/>
            <person name="Feng D."/>
            <person name="Sutovsky M."/>
            <person name="Sutovsky P."/>
        </authorList>
    </citation>
    <scope>INDUCTION BY THP AND DNB</scope>
</reference>
<keyword id="KW-0963">Cytoplasm</keyword>
<keyword id="KW-0221">Differentiation</keyword>
<keyword id="KW-0378">Hydrolase</keyword>
<keyword id="KW-0391">Immunity</keyword>
<keyword id="KW-0539">Nucleus</keyword>
<keyword id="KW-0645">Protease</keyword>
<keyword id="KW-0647">Proteasome</keyword>
<keyword id="KW-1185">Reference proteome</keyword>
<keyword id="KW-0888">Threonine protease</keyword>
<keyword id="KW-0865">Zymogen</keyword>
<evidence type="ECO:0000250" key="1"/>
<evidence type="ECO:0000250" key="2">
    <source>
        <dbReference type="UniProtKB" id="O35955"/>
    </source>
</evidence>
<evidence type="ECO:0000250" key="3">
    <source>
        <dbReference type="UniProtKB" id="P28062"/>
    </source>
</evidence>
<evidence type="ECO:0000255" key="4">
    <source>
        <dbReference type="PROSITE-ProRule" id="PRU00809"/>
    </source>
</evidence>
<evidence type="ECO:0000269" key="5">
    <source>
    </source>
</evidence>
<evidence type="ECO:0000305" key="6"/>
<dbReference type="EC" id="3.4.25.1"/>
<dbReference type="EMBL" id="BX883043">
    <property type="protein sequence ID" value="CAE83942.1"/>
    <property type="molecule type" value="Genomic_DNA"/>
</dbReference>
<dbReference type="EMBL" id="D10729">
    <property type="protein sequence ID" value="BAA01572.1"/>
    <property type="molecule type" value="mRNA"/>
</dbReference>
<dbReference type="PIR" id="S21126">
    <property type="entry name" value="S21126"/>
</dbReference>
<dbReference type="RefSeq" id="NP_542945.2">
    <property type="nucleotide sequence ID" value="NM_080767.2"/>
</dbReference>
<dbReference type="SMR" id="P28064"/>
<dbReference type="FunCoup" id="P28064">
    <property type="interactions" value="925"/>
</dbReference>
<dbReference type="STRING" id="10116.ENSRNOP00000000528"/>
<dbReference type="MEROPS" id="T01.012"/>
<dbReference type="PhosphoSitePlus" id="P28064"/>
<dbReference type="jPOST" id="P28064"/>
<dbReference type="PaxDb" id="10116-ENSRNOP00000000528"/>
<dbReference type="GeneID" id="24968"/>
<dbReference type="KEGG" id="rno:24968"/>
<dbReference type="UCSC" id="RGD:3426">
    <property type="organism name" value="rat"/>
</dbReference>
<dbReference type="AGR" id="RGD:3426"/>
<dbReference type="CTD" id="5696"/>
<dbReference type="RGD" id="3426">
    <property type="gene designation" value="Psmb8"/>
</dbReference>
<dbReference type="VEuPathDB" id="HostDB:ENSRNOG00000000456"/>
<dbReference type="eggNOG" id="KOG0175">
    <property type="taxonomic scope" value="Eukaryota"/>
</dbReference>
<dbReference type="HOGENOM" id="CLU_035750_7_1_1"/>
<dbReference type="InParanoid" id="P28064"/>
<dbReference type="OrthoDB" id="6720at9989"/>
<dbReference type="PhylomeDB" id="P28064"/>
<dbReference type="TreeFam" id="TF106223"/>
<dbReference type="Reactome" id="R-RNO-9907900">
    <property type="pathway name" value="Proteasome assembly"/>
</dbReference>
<dbReference type="PRO" id="PR:P28064"/>
<dbReference type="Proteomes" id="UP000002494">
    <property type="component" value="Chromosome 20"/>
</dbReference>
<dbReference type="Bgee" id="ENSRNOG00000000456">
    <property type="expression patterns" value="Expressed in thymus and 19 other cell types or tissues"/>
</dbReference>
<dbReference type="ExpressionAtlas" id="P28064">
    <property type="expression patterns" value="baseline and differential"/>
</dbReference>
<dbReference type="GO" id="GO:0005829">
    <property type="term" value="C:cytosol"/>
    <property type="evidence" value="ECO:0000318"/>
    <property type="project" value="GO_Central"/>
</dbReference>
<dbReference type="GO" id="GO:0005634">
    <property type="term" value="C:nucleus"/>
    <property type="evidence" value="ECO:0000318"/>
    <property type="project" value="GO_Central"/>
</dbReference>
<dbReference type="GO" id="GO:0000502">
    <property type="term" value="C:proteasome complex"/>
    <property type="evidence" value="ECO:0000266"/>
    <property type="project" value="RGD"/>
</dbReference>
<dbReference type="GO" id="GO:0005839">
    <property type="term" value="C:proteasome core complex"/>
    <property type="evidence" value="ECO:0000250"/>
    <property type="project" value="UniProtKB"/>
</dbReference>
<dbReference type="GO" id="GO:0019774">
    <property type="term" value="C:proteasome core complex, beta-subunit complex"/>
    <property type="evidence" value="ECO:0000250"/>
    <property type="project" value="UniProtKB"/>
</dbReference>
<dbReference type="GO" id="GO:1990111">
    <property type="term" value="C:spermatoproteasome complex"/>
    <property type="evidence" value="ECO:0000250"/>
    <property type="project" value="UniProtKB"/>
</dbReference>
<dbReference type="GO" id="GO:0004175">
    <property type="term" value="F:endopeptidase activity"/>
    <property type="evidence" value="ECO:0000318"/>
    <property type="project" value="GO_Central"/>
</dbReference>
<dbReference type="GO" id="GO:0004298">
    <property type="term" value="F:threonine-type endopeptidase activity"/>
    <property type="evidence" value="ECO:0007669"/>
    <property type="project" value="UniProtKB-KW"/>
</dbReference>
<dbReference type="GO" id="GO:0019882">
    <property type="term" value="P:antigen processing and presentation"/>
    <property type="evidence" value="ECO:0000266"/>
    <property type="project" value="RGD"/>
</dbReference>
<dbReference type="GO" id="GO:0045444">
    <property type="term" value="P:fat cell differentiation"/>
    <property type="evidence" value="ECO:0000250"/>
    <property type="project" value="UniProtKB"/>
</dbReference>
<dbReference type="GO" id="GO:0043161">
    <property type="term" value="P:proteasome-mediated ubiquitin-dependent protein catabolic process"/>
    <property type="evidence" value="ECO:0000266"/>
    <property type="project" value="RGD"/>
</dbReference>
<dbReference type="CDD" id="cd03761">
    <property type="entry name" value="proteasome_beta_type_5"/>
    <property type="match status" value="1"/>
</dbReference>
<dbReference type="FunFam" id="3.60.20.10:FF:000038">
    <property type="entry name" value="Proteasome subunit beta"/>
    <property type="match status" value="1"/>
</dbReference>
<dbReference type="Gene3D" id="3.60.20.10">
    <property type="entry name" value="Glutamine Phosphoribosylpyrophosphate, subunit 1, domain 1"/>
    <property type="match status" value="1"/>
</dbReference>
<dbReference type="InterPro" id="IPR029055">
    <property type="entry name" value="Ntn_hydrolases_N"/>
</dbReference>
<dbReference type="InterPro" id="IPR000243">
    <property type="entry name" value="Pept_T1A_subB"/>
</dbReference>
<dbReference type="InterPro" id="IPR016050">
    <property type="entry name" value="Proteasome_bsu_CS"/>
</dbReference>
<dbReference type="InterPro" id="IPR001353">
    <property type="entry name" value="Proteasome_sua/b"/>
</dbReference>
<dbReference type="InterPro" id="IPR023333">
    <property type="entry name" value="Proteasome_suB-type"/>
</dbReference>
<dbReference type="PANTHER" id="PTHR32194">
    <property type="entry name" value="METALLOPROTEASE TLDD"/>
    <property type="match status" value="1"/>
</dbReference>
<dbReference type="PANTHER" id="PTHR32194:SF8">
    <property type="entry name" value="PROTEASOME SUBUNIT BETA"/>
    <property type="match status" value="1"/>
</dbReference>
<dbReference type="Pfam" id="PF00227">
    <property type="entry name" value="Proteasome"/>
    <property type="match status" value="1"/>
</dbReference>
<dbReference type="PRINTS" id="PR00141">
    <property type="entry name" value="PROTEASOME"/>
</dbReference>
<dbReference type="SUPFAM" id="SSF56235">
    <property type="entry name" value="N-terminal nucleophile aminohydrolases (Ntn hydrolases)"/>
    <property type="match status" value="1"/>
</dbReference>
<dbReference type="PROSITE" id="PS00854">
    <property type="entry name" value="PROTEASOME_BETA_1"/>
    <property type="match status" value="1"/>
</dbReference>
<dbReference type="PROSITE" id="PS51476">
    <property type="entry name" value="PROTEASOME_BETA_2"/>
    <property type="match status" value="1"/>
</dbReference>
<sequence>MALLDLCGAPRGQRPEWAAVDAGSGLRSDPGHYSFSVQAPELALPRGMQPTEFLRSFGDDQERKVQIEMAHGTTTLAFKFQHGVIVAVDSRASAGSYIATIRVNKVIEINPYLLGTMSGCAADCQYWERLLAKECRLYYLRNGERISVSAASKLLSNMMLQYRGMGLSMGSMICGWDKKGPGLYYVDDNGTRLSGQMFSTGSGNTYAYGVMDSGYRQDLSPEEAYDLARRAIVYATHRDSYSGGVVNMYHMKKDGWVKVESTDVSDLLHKYREATL</sequence>
<protein>
    <recommendedName>
        <fullName>Proteasome subunit beta type-8</fullName>
        <ecNumber>3.4.25.1</ecNumber>
    </recommendedName>
    <alternativeName>
        <fullName>Macropain subunit C13</fullName>
    </alternativeName>
    <alternativeName>
        <fullName>Multicatalytic endopeptidase complex subunit C13</fullName>
    </alternativeName>
    <alternativeName>
        <fullName>Proteasome component C13</fullName>
    </alternativeName>
    <alternativeName>
        <fullName>Proteasome subunit beta-5i</fullName>
    </alternativeName>
</protein>
<comment type="function">
    <text evidence="1 3">The proteasome is a multicatalytic proteinase complex which is characterized by its ability to cleave peptides with Arg, Phe, Tyr, Leu, and Glu adjacent to the leaving group at neutral or slightly basic pH. The proteasome has an ATP-dependent proteolytic activity. This subunit is involved in antigen processing to generate class I binding peptides. May participate in the generation of spliced peptides resulting from the ligation of two separate proteasomal cleavage products that are not contiguous in the parental protein (By similarity). Required for adipocyte differentiation (By similarity).</text>
</comment>
<comment type="catalytic activity">
    <reaction>
        <text>Cleavage of peptide bonds with very broad specificity.</text>
        <dbReference type="EC" id="3.4.25.1"/>
    </reaction>
</comment>
<comment type="subunit">
    <text evidence="1">The 26S proteasome consists of a 20S proteasome core and two 19S regulatory subunits. The 20S proteasome core is composed of 28 subunits that are arranged in four stacked rings, resulting in a barrel-shaped structure. The two end rings are each formed by seven alpha subunits, and the two central rings are each formed by seven beta subunits. The catalytic chamber with the active sites is on the inside of the barrel. Component of the immunoproteasome, where it displaces the equivalent housekeeping subunit PSMB5. Component of the spermatoproteasome, a form of the proteasome specifically found in testis. Directly interacts with POMP (By similarity). Interacts with TAP1 (By similarity).</text>
</comment>
<comment type="subcellular location">
    <subcellularLocation>
        <location evidence="4">Cytoplasm</location>
    </subcellularLocation>
    <subcellularLocation>
        <location evidence="1">Nucleus</location>
    </subcellularLocation>
</comment>
<comment type="induction">
    <text evidence="5">Up-regulated by interferon gamma (at protein level). Down-regulated by theophylline (THP), a reprotoxic agent thought to induce infertility.</text>
</comment>
<comment type="PTM">
    <text evidence="2">Autocleaved. The resulting N-terminal Thr residue of the mature subunit is responsible for the nucleophile proteolytic activity.</text>
</comment>
<comment type="miscellaneous">
    <text>Encoded in the MHC class II region.</text>
</comment>
<comment type="similarity">
    <text evidence="4">Belongs to the peptidase T1B family.</text>
</comment>